<sequence length="347" mass="38908">MNPLTLIIIMFTLFMGTMITVFSSHWLTMWIGLEMNMLAIIPILINKATPRSTEAATKYFLTQATASMILMMAITLNILDSGQWTLINPQNQLTPVLITLALIIKLGMAPFHFWVPEVTQGVPLKSGLILLTWQKLAPLSILYQISPSINPTMMMSVAILSIMVGGWGGLNQTQLRKILAYSSIAHMGWMAAIITFNPNTMVLNLIIYILMTIPMFMMFMQHSSTTTLSLSQMWNKNPLMVSTILITLMSLGGLPPLTGFIPKWIIIQELTKNGNIILPTAMAMLALLNLYFYMRLIYSSSLTMFPTTNNLKMKWQFESTKRMPLITPLIILSTMLLPLTPALSVLN</sequence>
<feature type="chain" id="PRO_0000117631" description="NADH-ubiquinone oxidoreductase chain 2">
    <location>
        <begin position="1"/>
        <end position="347"/>
    </location>
</feature>
<feature type="transmembrane region" description="Helical" evidence="3">
    <location>
        <begin position="3"/>
        <end position="23"/>
    </location>
</feature>
<feature type="transmembrane region" description="Helical" evidence="3">
    <location>
        <begin position="59"/>
        <end position="79"/>
    </location>
</feature>
<feature type="transmembrane region" description="Helical" evidence="3">
    <location>
        <begin position="95"/>
        <end position="115"/>
    </location>
</feature>
<feature type="transmembrane region" description="Helical" evidence="3">
    <location>
        <begin position="127"/>
        <end position="147"/>
    </location>
</feature>
<feature type="transmembrane region" description="Helical" evidence="3">
    <location>
        <begin position="149"/>
        <end position="169"/>
    </location>
</feature>
<feature type="transmembrane region" description="Helical" evidence="3">
    <location>
        <begin position="178"/>
        <end position="198"/>
    </location>
</feature>
<feature type="transmembrane region" description="Helical" evidence="3">
    <location>
        <begin position="200"/>
        <end position="220"/>
    </location>
</feature>
<feature type="transmembrane region" description="Helical" evidence="3">
    <location>
        <begin position="241"/>
        <end position="261"/>
    </location>
</feature>
<feature type="transmembrane region" description="Helical" evidence="3">
    <location>
        <begin position="274"/>
        <end position="294"/>
    </location>
</feature>
<feature type="transmembrane region" description="Helical" evidence="3">
    <location>
        <begin position="325"/>
        <end position="345"/>
    </location>
</feature>
<gene>
    <name evidence="1" type="primary">MT-ND2</name>
    <name type="synonym">MTND2</name>
    <name type="synonym">NADH2</name>
    <name type="synonym">ND2</name>
</gene>
<protein>
    <recommendedName>
        <fullName evidence="1">NADH-ubiquinone oxidoreductase chain 2</fullName>
        <ecNumber evidence="1">7.1.1.2</ecNumber>
    </recommendedName>
    <alternativeName>
        <fullName>NADH dehydrogenase subunit 2</fullName>
    </alternativeName>
</protein>
<evidence type="ECO:0000250" key="1">
    <source>
        <dbReference type="UniProtKB" id="P03891"/>
    </source>
</evidence>
<evidence type="ECO:0000250" key="2">
    <source>
        <dbReference type="UniProtKB" id="P03892"/>
    </source>
</evidence>
<evidence type="ECO:0000255" key="3"/>
<evidence type="ECO:0000305" key="4"/>
<evidence type="ECO:0000312" key="5">
    <source>
        <dbReference type="Proteomes" id="UP000001811"/>
    </source>
</evidence>
<keyword id="KW-0249">Electron transport</keyword>
<keyword id="KW-0472">Membrane</keyword>
<keyword id="KW-0496">Mitochondrion</keyword>
<keyword id="KW-0999">Mitochondrion inner membrane</keyword>
<keyword id="KW-0520">NAD</keyword>
<keyword id="KW-1185">Reference proteome</keyword>
<keyword id="KW-0679">Respiratory chain</keyword>
<keyword id="KW-1278">Translocase</keyword>
<keyword id="KW-0812">Transmembrane</keyword>
<keyword id="KW-1133">Transmembrane helix</keyword>
<keyword id="KW-0813">Transport</keyword>
<keyword id="KW-0830">Ubiquinone</keyword>
<dbReference type="EC" id="7.1.1.2" evidence="1"/>
<dbReference type="EMBL" id="AJ001588">
    <property type="protein sequence ID" value="CAA04848.1"/>
    <property type="molecule type" value="Genomic_DNA"/>
</dbReference>
<dbReference type="PIR" id="T11481">
    <property type="entry name" value="T11481"/>
</dbReference>
<dbReference type="RefSeq" id="NP_007550.1">
    <property type="nucleotide sequence ID" value="NC_001913.1"/>
</dbReference>
<dbReference type="SMR" id="O79428"/>
<dbReference type="FunCoup" id="O79428">
    <property type="interactions" value="58"/>
</dbReference>
<dbReference type="STRING" id="9986.ENSOCUP00000026180"/>
<dbReference type="PaxDb" id="9986-ENSOCUP00000026180"/>
<dbReference type="Ensembl" id="ENSOCUT00000033115.1">
    <property type="protein sequence ID" value="ENSOCUP00000026180.2"/>
    <property type="gene ID" value="ENSOCUG00000029090.1"/>
</dbReference>
<dbReference type="GeneID" id="808230"/>
<dbReference type="KEGG" id="ocu:808230"/>
<dbReference type="CTD" id="4536"/>
<dbReference type="eggNOG" id="KOG4668">
    <property type="taxonomic scope" value="Eukaryota"/>
</dbReference>
<dbReference type="GeneTree" id="ENSGT00730000111348"/>
<dbReference type="HOGENOM" id="CLU_007100_1_3_1"/>
<dbReference type="InParanoid" id="O79428"/>
<dbReference type="OMA" id="HFWVPEV"/>
<dbReference type="OrthoDB" id="4092844at2759"/>
<dbReference type="Proteomes" id="UP000001811">
    <property type="component" value="Mitochondrion"/>
</dbReference>
<dbReference type="Bgee" id="ENSOCUG00000029090">
    <property type="expression patterns" value="Expressed in prefrontal cortex and 16 other cell types or tissues"/>
</dbReference>
<dbReference type="ExpressionAtlas" id="O79428">
    <property type="expression patterns" value="baseline"/>
</dbReference>
<dbReference type="GO" id="GO:0005743">
    <property type="term" value="C:mitochondrial inner membrane"/>
    <property type="evidence" value="ECO:0000250"/>
    <property type="project" value="UniProtKB"/>
</dbReference>
<dbReference type="GO" id="GO:0045271">
    <property type="term" value="C:respiratory chain complex I"/>
    <property type="evidence" value="ECO:0007669"/>
    <property type="project" value="Ensembl"/>
</dbReference>
<dbReference type="GO" id="GO:0008137">
    <property type="term" value="F:NADH dehydrogenase (ubiquinone) activity"/>
    <property type="evidence" value="ECO:0007669"/>
    <property type="project" value="UniProtKB-EC"/>
</dbReference>
<dbReference type="GO" id="GO:0006120">
    <property type="term" value="P:mitochondrial electron transport, NADH to ubiquinone"/>
    <property type="evidence" value="ECO:0007669"/>
    <property type="project" value="Ensembl"/>
</dbReference>
<dbReference type="GO" id="GO:0032981">
    <property type="term" value="P:mitochondrial respiratory chain complex I assembly"/>
    <property type="evidence" value="ECO:0007669"/>
    <property type="project" value="Ensembl"/>
</dbReference>
<dbReference type="GO" id="GO:0072593">
    <property type="term" value="P:reactive oxygen species metabolic process"/>
    <property type="evidence" value="ECO:0007669"/>
    <property type="project" value="Ensembl"/>
</dbReference>
<dbReference type="InterPro" id="IPR050175">
    <property type="entry name" value="Complex_I_Subunit_2"/>
</dbReference>
<dbReference type="InterPro" id="IPR010933">
    <property type="entry name" value="NADH_DH_su2_C"/>
</dbReference>
<dbReference type="InterPro" id="IPR003917">
    <property type="entry name" value="NADH_UbQ_OxRdtase_chain2"/>
</dbReference>
<dbReference type="InterPro" id="IPR001750">
    <property type="entry name" value="ND/Mrp_TM"/>
</dbReference>
<dbReference type="PANTHER" id="PTHR46552">
    <property type="entry name" value="NADH-UBIQUINONE OXIDOREDUCTASE CHAIN 2"/>
    <property type="match status" value="1"/>
</dbReference>
<dbReference type="PANTHER" id="PTHR46552:SF1">
    <property type="entry name" value="NADH-UBIQUINONE OXIDOREDUCTASE CHAIN 2"/>
    <property type="match status" value="1"/>
</dbReference>
<dbReference type="Pfam" id="PF06444">
    <property type="entry name" value="NADH_dehy_S2_C"/>
    <property type="match status" value="1"/>
</dbReference>
<dbReference type="Pfam" id="PF00361">
    <property type="entry name" value="Proton_antipo_M"/>
    <property type="match status" value="1"/>
</dbReference>
<dbReference type="PRINTS" id="PR01436">
    <property type="entry name" value="NADHDHGNASE2"/>
</dbReference>
<accession>O79428</accession>
<geneLocation type="mitochondrion"/>
<organism>
    <name type="scientific">Oryctolagus cuniculus</name>
    <name type="common">Rabbit</name>
    <dbReference type="NCBI Taxonomy" id="9986"/>
    <lineage>
        <taxon>Eukaryota</taxon>
        <taxon>Metazoa</taxon>
        <taxon>Chordata</taxon>
        <taxon>Craniata</taxon>
        <taxon>Vertebrata</taxon>
        <taxon>Euteleostomi</taxon>
        <taxon>Mammalia</taxon>
        <taxon>Eutheria</taxon>
        <taxon>Euarchontoglires</taxon>
        <taxon>Glires</taxon>
        <taxon>Lagomorpha</taxon>
        <taxon>Leporidae</taxon>
        <taxon>Oryctolagus</taxon>
    </lineage>
</organism>
<name>NU2M_RABIT</name>
<comment type="function">
    <text evidence="1">Core subunit of the mitochondrial membrane respiratory chain NADH dehydrogenase (Complex I) which catalyzes electron transfer from NADH through the respiratory chain, using ubiquinone as an electron acceptor. Essential for the catalytic activity and assembly of complex I.</text>
</comment>
<comment type="catalytic activity">
    <reaction evidence="1">
        <text>a ubiquinone + NADH + 5 H(+)(in) = a ubiquinol + NAD(+) + 4 H(+)(out)</text>
        <dbReference type="Rhea" id="RHEA:29091"/>
        <dbReference type="Rhea" id="RHEA-COMP:9565"/>
        <dbReference type="Rhea" id="RHEA-COMP:9566"/>
        <dbReference type="ChEBI" id="CHEBI:15378"/>
        <dbReference type="ChEBI" id="CHEBI:16389"/>
        <dbReference type="ChEBI" id="CHEBI:17976"/>
        <dbReference type="ChEBI" id="CHEBI:57540"/>
        <dbReference type="ChEBI" id="CHEBI:57945"/>
        <dbReference type="EC" id="7.1.1.2"/>
    </reaction>
</comment>
<comment type="subunit">
    <text evidence="1 2">Core subunit of respiratory chain NADH dehydrogenase (Complex I) which is composed of 45 different subunits. Interacts with TMEM242 (By similarity).</text>
</comment>
<comment type="subcellular location">
    <subcellularLocation>
        <location evidence="2">Mitochondrion inner membrane</location>
        <topology evidence="3">Multi-pass membrane protein</topology>
    </subcellularLocation>
</comment>
<comment type="similarity">
    <text evidence="4">Belongs to the complex I subunit 2 family.</text>
</comment>
<proteinExistence type="inferred from homology"/>
<reference key="1">
    <citation type="journal article" date="1998" name="Genomics">
        <title>The complete mitochondrial DNA sequence of the rabbit, Oryctolagus cuniculus.</title>
        <authorList>
            <person name="Gissi C."/>
            <person name="Gullberg A."/>
            <person name="Arnason U."/>
        </authorList>
    </citation>
    <scope>NUCLEOTIDE SEQUENCE [LARGE SCALE GENOMIC DNA]</scope>
    <source>
        <strain evidence="5">Thorbecke</strain>
    </source>
</reference>